<protein>
    <recommendedName>
        <fullName evidence="1">Aminomethyltransferase</fullName>
        <ecNumber evidence="1">2.1.2.10</ecNumber>
    </recommendedName>
    <alternativeName>
        <fullName evidence="1">Glycine cleavage system T protein</fullName>
    </alternativeName>
</protein>
<reference key="1">
    <citation type="submission" date="2007-06" db="EMBL/GenBank/DDBJ databases">
        <title>Complete sequence of chromosome of Staphylococcus aureus subsp. aureus JH1.</title>
        <authorList>
            <consortium name="US DOE Joint Genome Institute"/>
            <person name="Copeland A."/>
            <person name="Lucas S."/>
            <person name="Lapidus A."/>
            <person name="Barry K."/>
            <person name="Detter J.C."/>
            <person name="Glavina del Rio T."/>
            <person name="Hammon N."/>
            <person name="Israni S."/>
            <person name="Dalin E."/>
            <person name="Tice H."/>
            <person name="Pitluck S."/>
            <person name="Chain P."/>
            <person name="Malfatti S."/>
            <person name="Shin M."/>
            <person name="Vergez L."/>
            <person name="Schmutz J."/>
            <person name="Larimer F."/>
            <person name="Land M."/>
            <person name="Hauser L."/>
            <person name="Kyrpides N."/>
            <person name="Ivanova N."/>
            <person name="Tomasz A."/>
            <person name="Richardson P."/>
        </authorList>
    </citation>
    <scope>NUCLEOTIDE SEQUENCE [LARGE SCALE GENOMIC DNA]</scope>
    <source>
        <strain>JH1</strain>
    </source>
</reference>
<organism>
    <name type="scientific">Staphylococcus aureus (strain JH1)</name>
    <dbReference type="NCBI Taxonomy" id="359787"/>
    <lineage>
        <taxon>Bacteria</taxon>
        <taxon>Bacillati</taxon>
        <taxon>Bacillota</taxon>
        <taxon>Bacilli</taxon>
        <taxon>Bacillales</taxon>
        <taxon>Staphylococcaceae</taxon>
        <taxon>Staphylococcus</taxon>
    </lineage>
</organism>
<gene>
    <name evidence="1" type="primary">gcvT</name>
    <name type="ordered locus">SaurJH1_1628</name>
</gene>
<evidence type="ECO:0000255" key="1">
    <source>
        <dbReference type="HAMAP-Rule" id="MF_00259"/>
    </source>
</evidence>
<dbReference type="EC" id="2.1.2.10" evidence="1"/>
<dbReference type="EMBL" id="CP000736">
    <property type="protein sequence ID" value="ABR52476.1"/>
    <property type="molecule type" value="Genomic_DNA"/>
</dbReference>
<dbReference type="SMR" id="A6U208"/>
<dbReference type="KEGG" id="sah:SaurJH1_1628"/>
<dbReference type="HOGENOM" id="CLU_007884_10_2_9"/>
<dbReference type="GO" id="GO:0005829">
    <property type="term" value="C:cytosol"/>
    <property type="evidence" value="ECO:0007669"/>
    <property type="project" value="TreeGrafter"/>
</dbReference>
<dbReference type="GO" id="GO:0005960">
    <property type="term" value="C:glycine cleavage complex"/>
    <property type="evidence" value="ECO:0007669"/>
    <property type="project" value="InterPro"/>
</dbReference>
<dbReference type="GO" id="GO:0004047">
    <property type="term" value="F:aminomethyltransferase activity"/>
    <property type="evidence" value="ECO:0007669"/>
    <property type="project" value="UniProtKB-UniRule"/>
</dbReference>
<dbReference type="GO" id="GO:0008483">
    <property type="term" value="F:transaminase activity"/>
    <property type="evidence" value="ECO:0007669"/>
    <property type="project" value="UniProtKB-KW"/>
</dbReference>
<dbReference type="GO" id="GO:0019464">
    <property type="term" value="P:glycine decarboxylation via glycine cleavage system"/>
    <property type="evidence" value="ECO:0007669"/>
    <property type="project" value="UniProtKB-UniRule"/>
</dbReference>
<dbReference type="FunFam" id="2.40.30.110:FF:000007">
    <property type="entry name" value="Aminomethyltransferase"/>
    <property type="match status" value="1"/>
</dbReference>
<dbReference type="FunFam" id="3.30.70.1400:FF:000001">
    <property type="entry name" value="Aminomethyltransferase"/>
    <property type="match status" value="1"/>
</dbReference>
<dbReference type="FunFam" id="4.10.1250.10:FF:000001">
    <property type="entry name" value="Aminomethyltransferase"/>
    <property type="match status" value="1"/>
</dbReference>
<dbReference type="Gene3D" id="2.40.30.110">
    <property type="entry name" value="Aminomethyltransferase beta-barrel domains"/>
    <property type="match status" value="1"/>
</dbReference>
<dbReference type="Gene3D" id="3.30.70.1400">
    <property type="entry name" value="Aminomethyltransferase beta-barrel domains"/>
    <property type="match status" value="1"/>
</dbReference>
<dbReference type="Gene3D" id="4.10.1250.10">
    <property type="entry name" value="Aminomethyltransferase fragment"/>
    <property type="match status" value="1"/>
</dbReference>
<dbReference type="Gene3D" id="3.30.1360.120">
    <property type="entry name" value="Probable tRNA modification gtpase trme, domain 1"/>
    <property type="match status" value="1"/>
</dbReference>
<dbReference type="HAMAP" id="MF_00259">
    <property type="entry name" value="GcvT"/>
    <property type="match status" value="1"/>
</dbReference>
<dbReference type="InterPro" id="IPR006223">
    <property type="entry name" value="GCS_T"/>
</dbReference>
<dbReference type="InterPro" id="IPR022903">
    <property type="entry name" value="GCS_T_bac"/>
</dbReference>
<dbReference type="InterPro" id="IPR013977">
    <property type="entry name" value="GCST_C"/>
</dbReference>
<dbReference type="InterPro" id="IPR006222">
    <property type="entry name" value="GCV_T_N"/>
</dbReference>
<dbReference type="InterPro" id="IPR028896">
    <property type="entry name" value="GcvT/YgfZ/DmdA"/>
</dbReference>
<dbReference type="InterPro" id="IPR029043">
    <property type="entry name" value="GcvT/YgfZ_C"/>
</dbReference>
<dbReference type="InterPro" id="IPR027266">
    <property type="entry name" value="TrmE/GcvT_dom1"/>
</dbReference>
<dbReference type="NCBIfam" id="TIGR00528">
    <property type="entry name" value="gcvT"/>
    <property type="match status" value="1"/>
</dbReference>
<dbReference type="NCBIfam" id="NF001567">
    <property type="entry name" value="PRK00389.1"/>
    <property type="match status" value="1"/>
</dbReference>
<dbReference type="PANTHER" id="PTHR43757">
    <property type="entry name" value="AMINOMETHYLTRANSFERASE"/>
    <property type="match status" value="1"/>
</dbReference>
<dbReference type="PANTHER" id="PTHR43757:SF2">
    <property type="entry name" value="AMINOMETHYLTRANSFERASE, MITOCHONDRIAL"/>
    <property type="match status" value="1"/>
</dbReference>
<dbReference type="Pfam" id="PF01571">
    <property type="entry name" value="GCV_T"/>
    <property type="match status" value="1"/>
</dbReference>
<dbReference type="Pfam" id="PF08669">
    <property type="entry name" value="GCV_T_C"/>
    <property type="match status" value="1"/>
</dbReference>
<dbReference type="PIRSF" id="PIRSF006487">
    <property type="entry name" value="GcvT"/>
    <property type="match status" value="1"/>
</dbReference>
<dbReference type="SUPFAM" id="SSF101790">
    <property type="entry name" value="Aminomethyltransferase beta-barrel domain"/>
    <property type="match status" value="1"/>
</dbReference>
<dbReference type="SUPFAM" id="SSF103025">
    <property type="entry name" value="Folate-binding domain"/>
    <property type="match status" value="1"/>
</dbReference>
<proteinExistence type="inferred from homology"/>
<comment type="function">
    <text evidence="1">The glycine cleavage system catalyzes the degradation of glycine.</text>
</comment>
<comment type="catalytic activity">
    <reaction evidence="1">
        <text>N(6)-[(R)-S(8)-aminomethyldihydrolipoyl]-L-lysyl-[protein] + (6S)-5,6,7,8-tetrahydrofolate = N(6)-[(R)-dihydrolipoyl]-L-lysyl-[protein] + (6R)-5,10-methylene-5,6,7,8-tetrahydrofolate + NH4(+)</text>
        <dbReference type="Rhea" id="RHEA:16945"/>
        <dbReference type="Rhea" id="RHEA-COMP:10475"/>
        <dbReference type="Rhea" id="RHEA-COMP:10492"/>
        <dbReference type="ChEBI" id="CHEBI:15636"/>
        <dbReference type="ChEBI" id="CHEBI:28938"/>
        <dbReference type="ChEBI" id="CHEBI:57453"/>
        <dbReference type="ChEBI" id="CHEBI:83100"/>
        <dbReference type="ChEBI" id="CHEBI:83143"/>
        <dbReference type="EC" id="2.1.2.10"/>
    </reaction>
</comment>
<comment type="subunit">
    <text evidence="1">The glycine cleavage system is composed of four proteins: P, T, L and H.</text>
</comment>
<comment type="similarity">
    <text evidence="1">Belongs to the GcvT family.</text>
</comment>
<feature type="chain" id="PRO_1000078595" description="Aminomethyltransferase">
    <location>
        <begin position="1"/>
        <end position="363"/>
    </location>
</feature>
<keyword id="KW-0032">Aminotransferase</keyword>
<keyword id="KW-0808">Transferase</keyword>
<name>GCST_STAA2</name>
<accession>A6U208</accession>
<sequence>MSSDLKQTPLYQNYVDRGAKIVEFGGWAMPVQFSSIKEEHNAVRYEIGLFDVSHMGEIEVTGKDASQFVQYLLSNDTDNLTTSKALYTALCNEEGGIIDDLVIYKLADDNYLLVVNAANTEKDFNWILKHKEKFDVEVQNVSNQYGQLAIQGPKARDLINQLVDEDVTEMKMFEFKQGVKLFGANVILSQSGYTGEDGFEIYCNIDDTEKIWDGLLEYNVMPCGLGARDTLRLEAGLPLHGQDLTESITPYEGGIAFASKPLIDADFIGKSVLKDQKENGAPRRTVGLELLEKGIARTGYEVMDLDGNIIGEVTSGTQSPSSGKSIALAMIKRDEFEMGRELLVQVRKRQLKAKIVKKNQIDK</sequence>